<proteinExistence type="inferred from homology"/>
<protein>
    <recommendedName>
        <fullName evidence="1">ATP phosphoribosyltransferase</fullName>
        <shortName evidence="1">ATP-PRT</shortName>
        <shortName evidence="1">ATP-PRTase</shortName>
        <ecNumber evidence="1">2.4.2.17</ecNumber>
    </recommendedName>
</protein>
<comment type="function">
    <text evidence="1">Catalyzes the condensation of ATP and 5-phosphoribose 1-diphosphate to form N'-(5'-phosphoribosyl)-ATP (PR-ATP). Has a crucial role in the pathway because the rate of histidine biosynthesis seems to be controlled primarily by regulation of HisG enzymatic activity.</text>
</comment>
<comment type="catalytic activity">
    <reaction evidence="1">
        <text>1-(5-phospho-beta-D-ribosyl)-ATP + diphosphate = 5-phospho-alpha-D-ribose 1-diphosphate + ATP</text>
        <dbReference type="Rhea" id="RHEA:18473"/>
        <dbReference type="ChEBI" id="CHEBI:30616"/>
        <dbReference type="ChEBI" id="CHEBI:33019"/>
        <dbReference type="ChEBI" id="CHEBI:58017"/>
        <dbReference type="ChEBI" id="CHEBI:73183"/>
        <dbReference type="EC" id="2.4.2.17"/>
    </reaction>
</comment>
<comment type="pathway">
    <text evidence="1">Amino-acid biosynthesis; L-histidine biosynthesis; L-histidine from 5-phospho-alpha-D-ribose 1-diphosphate: step 1/9.</text>
</comment>
<comment type="subunit">
    <text evidence="1">Heteromultimer composed of HisG and HisZ subunits.</text>
</comment>
<comment type="subcellular location">
    <subcellularLocation>
        <location evidence="1">Cytoplasm</location>
    </subcellularLocation>
</comment>
<comment type="domain">
    <text>Lacks the C-terminal regulatory region which is replaced by HisZ.</text>
</comment>
<comment type="similarity">
    <text evidence="1">Belongs to the ATP phosphoribosyltransferase family. Short subfamily.</text>
</comment>
<dbReference type="EC" id="2.4.2.17" evidence="1"/>
<dbReference type="EMBL" id="CP000378">
    <property type="protein sequence ID" value="ABF77581.1"/>
    <property type="molecule type" value="Genomic_DNA"/>
</dbReference>
<dbReference type="SMR" id="Q1BS24"/>
<dbReference type="HOGENOM" id="CLU_038115_2_0_4"/>
<dbReference type="UniPathway" id="UPA00031">
    <property type="reaction ID" value="UER00006"/>
</dbReference>
<dbReference type="GO" id="GO:0005737">
    <property type="term" value="C:cytoplasm"/>
    <property type="evidence" value="ECO:0007669"/>
    <property type="project" value="UniProtKB-SubCell"/>
</dbReference>
<dbReference type="GO" id="GO:0005524">
    <property type="term" value="F:ATP binding"/>
    <property type="evidence" value="ECO:0007669"/>
    <property type="project" value="UniProtKB-KW"/>
</dbReference>
<dbReference type="GO" id="GO:0003879">
    <property type="term" value="F:ATP phosphoribosyltransferase activity"/>
    <property type="evidence" value="ECO:0007669"/>
    <property type="project" value="UniProtKB-UniRule"/>
</dbReference>
<dbReference type="GO" id="GO:0000105">
    <property type="term" value="P:L-histidine biosynthetic process"/>
    <property type="evidence" value="ECO:0007669"/>
    <property type="project" value="UniProtKB-UniRule"/>
</dbReference>
<dbReference type="CDD" id="cd13595">
    <property type="entry name" value="PBP2_HisGs"/>
    <property type="match status" value="1"/>
</dbReference>
<dbReference type="FunFam" id="3.40.190.10:FF:000011">
    <property type="entry name" value="ATP phosphoribosyltransferase"/>
    <property type="match status" value="1"/>
</dbReference>
<dbReference type="Gene3D" id="3.40.190.10">
    <property type="entry name" value="Periplasmic binding protein-like II"/>
    <property type="match status" value="2"/>
</dbReference>
<dbReference type="HAMAP" id="MF_01018">
    <property type="entry name" value="HisG_Short"/>
    <property type="match status" value="1"/>
</dbReference>
<dbReference type="InterPro" id="IPR013820">
    <property type="entry name" value="ATP_PRibTrfase_cat"/>
</dbReference>
<dbReference type="InterPro" id="IPR018198">
    <property type="entry name" value="ATP_PRibTrfase_CS"/>
</dbReference>
<dbReference type="InterPro" id="IPR001348">
    <property type="entry name" value="ATP_PRibTrfase_HisG"/>
</dbReference>
<dbReference type="InterPro" id="IPR024893">
    <property type="entry name" value="ATP_PRibTrfase_HisG_short"/>
</dbReference>
<dbReference type="NCBIfam" id="TIGR00070">
    <property type="entry name" value="hisG"/>
    <property type="match status" value="1"/>
</dbReference>
<dbReference type="PANTHER" id="PTHR21403:SF8">
    <property type="entry name" value="ATP PHOSPHORIBOSYLTRANSFERASE"/>
    <property type="match status" value="1"/>
</dbReference>
<dbReference type="PANTHER" id="PTHR21403">
    <property type="entry name" value="ATP PHOSPHORIBOSYLTRANSFERASE ATP-PRTASE"/>
    <property type="match status" value="1"/>
</dbReference>
<dbReference type="Pfam" id="PF01634">
    <property type="entry name" value="HisG"/>
    <property type="match status" value="1"/>
</dbReference>
<dbReference type="SUPFAM" id="SSF53850">
    <property type="entry name" value="Periplasmic binding protein-like II"/>
    <property type="match status" value="1"/>
</dbReference>
<dbReference type="PROSITE" id="PS01316">
    <property type="entry name" value="ATP_P_PHORIBOSYLTR"/>
    <property type="match status" value="1"/>
</dbReference>
<organism>
    <name type="scientific">Burkholderia orbicola (strain AU 1054)</name>
    <dbReference type="NCBI Taxonomy" id="331271"/>
    <lineage>
        <taxon>Bacteria</taxon>
        <taxon>Pseudomonadati</taxon>
        <taxon>Pseudomonadota</taxon>
        <taxon>Betaproteobacteria</taxon>
        <taxon>Burkholderiales</taxon>
        <taxon>Burkholderiaceae</taxon>
        <taxon>Burkholderia</taxon>
        <taxon>Burkholderia cepacia complex</taxon>
        <taxon>Burkholderia orbicola</taxon>
    </lineage>
</organism>
<keyword id="KW-0028">Amino-acid biosynthesis</keyword>
<keyword id="KW-0067">ATP-binding</keyword>
<keyword id="KW-0963">Cytoplasm</keyword>
<keyword id="KW-0328">Glycosyltransferase</keyword>
<keyword id="KW-0368">Histidine biosynthesis</keyword>
<keyword id="KW-0547">Nucleotide-binding</keyword>
<keyword id="KW-0808">Transferase</keyword>
<reference key="1">
    <citation type="submission" date="2006-05" db="EMBL/GenBank/DDBJ databases">
        <title>Complete sequence of chromosome 1 of Burkholderia cenocepacia AU 1054.</title>
        <authorList>
            <consortium name="US DOE Joint Genome Institute"/>
            <person name="Copeland A."/>
            <person name="Lucas S."/>
            <person name="Lapidus A."/>
            <person name="Barry K."/>
            <person name="Detter J.C."/>
            <person name="Glavina del Rio T."/>
            <person name="Hammon N."/>
            <person name="Israni S."/>
            <person name="Dalin E."/>
            <person name="Tice H."/>
            <person name="Pitluck S."/>
            <person name="Chain P."/>
            <person name="Malfatti S."/>
            <person name="Shin M."/>
            <person name="Vergez L."/>
            <person name="Schmutz J."/>
            <person name="Larimer F."/>
            <person name="Land M."/>
            <person name="Hauser L."/>
            <person name="Kyrpides N."/>
            <person name="Lykidis A."/>
            <person name="LiPuma J.J."/>
            <person name="Konstantinidis K."/>
            <person name="Tiedje J.M."/>
            <person name="Richardson P."/>
        </authorList>
    </citation>
    <scope>NUCLEOTIDE SEQUENCE [LARGE SCALE GENOMIC DNA]</scope>
    <source>
        <strain>AU 1054</strain>
    </source>
</reference>
<sequence>MTAPLTLALSKGRIFEETLPLLAAAGVQVAEDPETSRKLILPTTDPNLRVIIVRASDVPTYVEYGAADFGVAGKDVLVEHGGSGLYQPIDLNIARCRMSVAVPAGFDYANAVRQGARLRVATKYVETAREHFAAKGVHVDLIKLYGSMELAPLVGLADAIVDLVSSGGTLKANNLVEVEEIMAISSRLVVNQAALKLKRAALKPILDAFERASQNGG</sequence>
<feature type="chain" id="PRO_1000063267" description="ATP phosphoribosyltransferase">
    <location>
        <begin position="1"/>
        <end position="217"/>
    </location>
</feature>
<evidence type="ECO:0000255" key="1">
    <source>
        <dbReference type="HAMAP-Rule" id="MF_01018"/>
    </source>
</evidence>
<accession>Q1BS24</accession>
<gene>
    <name evidence="1" type="primary">hisG</name>
    <name type="ordered locus">Bcen_2683</name>
</gene>
<name>HIS1_BURO1</name>